<dbReference type="EMBL" id="DP000038">
    <property type="protein sequence ID" value="ABO52932.1"/>
    <property type="molecule type" value="Genomic_DNA"/>
</dbReference>
<dbReference type="SMR" id="A4K2P7"/>
<dbReference type="GO" id="GO:0005615">
    <property type="term" value="C:extracellular space"/>
    <property type="evidence" value="ECO:0007669"/>
    <property type="project" value="TreeGrafter"/>
</dbReference>
<dbReference type="GO" id="GO:0004867">
    <property type="term" value="F:serine-type endopeptidase inhibitor activity"/>
    <property type="evidence" value="ECO:0007669"/>
    <property type="project" value="UniProtKB-KW"/>
</dbReference>
<dbReference type="GO" id="GO:0019731">
    <property type="term" value="P:antibacterial humoral response"/>
    <property type="evidence" value="ECO:0007669"/>
    <property type="project" value="TreeGrafter"/>
</dbReference>
<dbReference type="GO" id="GO:0045087">
    <property type="term" value="P:innate immune response"/>
    <property type="evidence" value="ECO:0007669"/>
    <property type="project" value="TreeGrafter"/>
</dbReference>
<dbReference type="Gene3D" id="4.10.75.10">
    <property type="entry name" value="Elafin-like"/>
    <property type="match status" value="2"/>
</dbReference>
<dbReference type="InterPro" id="IPR036645">
    <property type="entry name" value="Elafin-like_sf"/>
</dbReference>
<dbReference type="InterPro" id="IPR008197">
    <property type="entry name" value="WAP_dom"/>
</dbReference>
<dbReference type="InterPro" id="IPR050514">
    <property type="entry name" value="WAP_four-disulfide_core"/>
</dbReference>
<dbReference type="PANTHER" id="PTHR19441:SF39">
    <property type="entry name" value="WAP FOUR-DISULFIDE CORE DOMAIN PROTEIN 5"/>
    <property type="match status" value="1"/>
</dbReference>
<dbReference type="PANTHER" id="PTHR19441">
    <property type="entry name" value="WHEY ACDIC PROTEIN WAP"/>
    <property type="match status" value="1"/>
</dbReference>
<dbReference type="Pfam" id="PF00095">
    <property type="entry name" value="WAP"/>
    <property type="match status" value="2"/>
</dbReference>
<dbReference type="PRINTS" id="PR00003">
    <property type="entry name" value="4DISULPHCORE"/>
</dbReference>
<dbReference type="SMART" id="SM00217">
    <property type="entry name" value="WAP"/>
    <property type="match status" value="2"/>
</dbReference>
<dbReference type="SUPFAM" id="SSF57256">
    <property type="entry name" value="Elafin-like"/>
    <property type="match status" value="2"/>
</dbReference>
<dbReference type="PROSITE" id="PS51390">
    <property type="entry name" value="WAP"/>
    <property type="match status" value="2"/>
</dbReference>
<sequence>MRIQSLLLLGALLAVGSQLPAVFGRKKGEKWGGCPADDGPCLLSVPDQCVEDSQCPLTRKCCYRACFRQCVPRVSVKPGSCPQDQLRCLSPMNHLCHKDSDCSGKKRCCHSACGRDCRDPARG</sequence>
<name>WFDC5_COLGU</name>
<comment type="function">
    <text evidence="1">Putative acid-stable proteinase inhibitor.</text>
</comment>
<comment type="subcellular location">
    <subcellularLocation>
        <location evidence="4">Secreted</location>
    </subcellularLocation>
</comment>
<reference key="1">
    <citation type="journal article" date="2007" name="Genome Res.">
        <title>Comparative sequence analyses reveal rapid and divergent evolutionary changes of the WFDC locus in the primate lineage.</title>
        <authorList>
            <consortium name="NISC comparative sequencing program"/>
            <person name="Hurle B."/>
            <person name="Swanson W."/>
            <person name="Green E.D."/>
        </authorList>
    </citation>
    <scope>NUCLEOTIDE SEQUENCE [GENOMIC DNA]</scope>
</reference>
<keyword id="KW-1015">Disulfide bond</keyword>
<keyword id="KW-0646">Protease inhibitor</keyword>
<keyword id="KW-0677">Repeat</keyword>
<keyword id="KW-0964">Secreted</keyword>
<keyword id="KW-0722">Serine protease inhibitor</keyword>
<keyword id="KW-0732">Signal</keyword>
<protein>
    <recommendedName>
        <fullName>WAP four-disulfide core domain protein 5</fullName>
    </recommendedName>
</protein>
<evidence type="ECO:0000250" key="1"/>
<evidence type="ECO:0000255" key="2"/>
<evidence type="ECO:0000255" key="3">
    <source>
        <dbReference type="PROSITE-ProRule" id="PRU00722"/>
    </source>
</evidence>
<evidence type="ECO:0000305" key="4"/>
<proteinExistence type="inferred from homology"/>
<feature type="signal peptide" evidence="2">
    <location>
        <begin position="1"/>
        <end position="24"/>
    </location>
</feature>
<feature type="chain" id="PRO_0000289636" description="WAP four-disulfide core domain protein 5">
    <location>
        <begin position="25"/>
        <end position="123"/>
    </location>
</feature>
<feature type="domain" description="WAP 1" evidence="3">
    <location>
        <begin position="27"/>
        <end position="73"/>
    </location>
</feature>
<feature type="domain" description="WAP 2" evidence="3">
    <location>
        <begin position="74"/>
        <end position="121"/>
    </location>
</feature>
<feature type="disulfide bond" evidence="3">
    <location>
        <begin position="34"/>
        <end position="62"/>
    </location>
</feature>
<feature type="disulfide bond" evidence="3">
    <location>
        <begin position="41"/>
        <end position="66"/>
    </location>
</feature>
<feature type="disulfide bond" evidence="3">
    <location>
        <begin position="49"/>
        <end position="61"/>
    </location>
</feature>
<feature type="disulfide bond" evidence="3">
    <location>
        <begin position="55"/>
        <end position="70"/>
    </location>
</feature>
<feature type="disulfide bond" evidence="3">
    <location>
        <begin position="81"/>
        <end position="109"/>
    </location>
</feature>
<feature type="disulfide bond" evidence="3">
    <location>
        <begin position="88"/>
        <end position="113"/>
    </location>
</feature>
<feature type="disulfide bond" evidence="3">
    <location>
        <begin position="96"/>
        <end position="108"/>
    </location>
</feature>
<feature type="disulfide bond" evidence="3">
    <location>
        <begin position="102"/>
        <end position="117"/>
    </location>
</feature>
<organism>
    <name type="scientific">Colobus guereza</name>
    <name type="common">Mantled guereza</name>
    <name type="synonym">Eastern black-and-white colobus monkey</name>
    <dbReference type="NCBI Taxonomy" id="33548"/>
    <lineage>
        <taxon>Eukaryota</taxon>
        <taxon>Metazoa</taxon>
        <taxon>Chordata</taxon>
        <taxon>Craniata</taxon>
        <taxon>Vertebrata</taxon>
        <taxon>Euteleostomi</taxon>
        <taxon>Mammalia</taxon>
        <taxon>Eutheria</taxon>
        <taxon>Euarchontoglires</taxon>
        <taxon>Primates</taxon>
        <taxon>Haplorrhini</taxon>
        <taxon>Catarrhini</taxon>
        <taxon>Cercopithecidae</taxon>
        <taxon>Colobinae</taxon>
        <taxon>Colobus</taxon>
    </lineage>
</organism>
<gene>
    <name type="primary">WFDC5</name>
</gene>
<accession>A4K2P7</accession>